<accession>Q923B0</accession>
<accession>Q66JP0</accession>
<organism>
    <name type="scientific">Mus musculus</name>
    <name type="common">Mouse</name>
    <dbReference type="NCBI Taxonomy" id="10090"/>
    <lineage>
        <taxon>Eukaryota</taxon>
        <taxon>Metazoa</taxon>
        <taxon>Chordata</taxon>
        <taxon>Craniata</taxon>
        <taxon>Vertebrata</taxon>
        <taxon>Euteleostomi</taxon>
        <taxon>Mammalia</taxon>
        <taxon>Eutheria</taxon>
        <taxon>Euarchontoglires</taxon>
        <taxon>Glires</taxon>
        <taxon>Rodentia</taxon>
        <taxon>Myomorpha</taxon>
        <taxon>Muroidea</taxon>
        <taxon>Muridae</taxon>
        <taxon>Murinae</taxon>
        <taxon>Mus</taxon>
        <taxon>Mus</taxon>
    </lineage>
</organism>
<gene>
    <name type="primary">Ggact</name>
    <name type="synonym">A2ld1</name>
</gene>
<sequence>MAHIFVYGTLKRGQPNHKVMLDHSHGLAAFRGRGCTVESFPLVIAGEHNIPWLLYLPGKGHCVTGEIYEVDEQMLRFLDDFEDCPSMYQRTALQVQVLEWEGDGDPGDSVQCFVYTTATYAPEWLFLPYHESYDSEGPHGLRYNPRENR</sequence>
<feature type="chain" id="PRO_0000320204" description="Gamma-glutamylaminecyclotransferase">
    <location>
        <begin position="1"/>
        <end position="149"/>
    </location>
</feature>
<feature type="active site" description="Proton acceptor" evidence="1">
    <location>
        <position position="82"/>
    </location>
</feature>
<feature type="binding site" evidence="1">
    <location>
        <begin position="7"/>
        <end position="10"/>
    </location>
    <ligand>
        <name>substrate</name>
    </ligand>
</feature>
<feature type="splice variant" id="VSP_031641" description="In isoform 2." evidence="3">
    <original>EIYEVDEQMLRFLD</original>
    <variation>NWKGGHICHCRWIH</variation>
    <location>
        <begin position="66"/>
        <end position="79"/>
    </location>
</feature>
<feature type="splice variant" id="VSP_031642" description="In isoform 2." evidence="3">
    <location>
        <begin position="80"/>
        <end position="149"/>
    </location>
</feature>
<feature type="strand" evidence="6">
    <location>
        <begin position="2"/>
        <end position="6"/>
    </location>
</feature>
<feature type="strand" evidence="7">
    <location>
        <begin position="11"/>
        <end position="13"/>
    </location>
</feature>
<feature type="turn" evidence="6">
    <location>
        <begin position="15"/>
        <end position="17"/>
    </location>
</feature>
<feature type="helix" evidence="6">
    <location>
        <begin position="18"/>
        <end position="21"/>
    </location>
</feature>
<feature type="helix" evidence="6">
    <location>
        <begin position="23"/>
        <end position="25"/>
    </location>
</feature>
<feature type="strand" evidence="6">
    <location>
        <begin position="28"/>
        <end position="38"/>
    </location>
</feature>
<feature type="strand" evidence="6">
    <location>
        <begin position="42"/>
        <end position="45"/>
    </location>
</feature>
<feature type="turn" evidence="6">
    <location>
        <begin position="46"/>
        <end position="49"/>
    </location>
</feature>
<feature type="strand" evidence="6">
    <location>
        <begin position="50"/>
        <end position="55"/>
    </location>
</feature>
<feature type="strand" evidence="6">
    <location>
        <begin position="59"/>
        <end position="61"/>
    </location>
</feature>
<feature type="strand" evidence="6">
    <location>
        <begin position="64"/>
        <end position="70"/>
    </location>
</feature>
<feature type="helix" evidence="6">
    <location>
        <begin position="72"/>
        <end position="81"/>
    </location>
</feature>
<feature type="turn" evidence="6">
    <location>
        <begin position="82"/>
        <end position="86"/>
    </location>
</feature>
<feature type="strand" evidence="6">
    <location>
        <begin position="89"/>
        <end position="100"/>
    </location>
</feature>
<feature type="strand" evidence="6">
    <location>
        <begin position="108"/>
        <end position="118"/>
    </location>
</feature>
<feature type="helix" evidence="6">
    <location>
        <begin position="122"/>
        <end position="126"/>
    </location>
</feature>
<protein>
    <recommendedName>
        <fullName>Gamma-glutamylaminecyclotransferase</fullName>
        <shortName>GGACT</shortName>
        <ecNumber evidence="2">4.3.2.8</ecNumber>
    </recommendedName>
    <alternativeName>
        <fullName>AIG2-like domain-containing protein 1</fullName>
    </alternativeName>
    <alternativeName>
        <fullName>Gamma-glutamylamine cyclotransferase</fullName>
    </alternativeName>
</protein>
<reference key="1">
    <citation type="journal article" date="2005" name="Science">
        <title>The transcriptional landscape of the mammalian genome.</title>
        <authorList>
            <person name="Carninci P."/>
            <person name="Kasukawa T."/>
            <person name="Katayama S."/>
            <person name="Gough J."/>
            <person name="Frith M.C."/>
            <person name="Maeda N."/>
            <person name="Oyama R."/>
            <person name="Ravasi T."/>
            <person name="Lenhard B."/>
            <person name="Wells C."/>
            <person name="Kodzius R."/>
            <person name="Shimokawa K."/>
            <person name="Bajic V.B."/>
            <person name="Brenner S.E."/>
            <person name="Batalov S."/>
            <person name="Forrest A.R."/>
            <person name="Zavolan M."/>
            <person name="Davis M.J."/>
            <person name="Wilming L.G."/>
            <person name="Aidinis V."/>
            <person name="Allen J.E."/>
            <person name="Ambesi-Impiombato A."/>
            <person name="Apweiler R."/>
            <person name="Aturaliya R.N."/>
            <person name="Bailey T.L."/>
            <person name="Bansal M."/>
            <person name="Baxter L."/>
            <person name="Beisel K.W."/>
            <person name="Bersano T."/>
            <person name="Bono H."/>
            <person name="Chalk A.M."/>
            <person name="Chiu K.P."/>
            <person name="Choudhary V."/>
            <person name="Christoffels A."/>
            <person name="Clutterbuck D.R."/>
            <person name="Crowe M.L."/>
            <person name="Dalla E."/>
            <person name="Dalrymple B.P."/>
            <person name="de Bono B."/>
            <person name="Della Gatta G."/>
            <person name="di Bernardo D."/>
            <person name="Down T."/>
            <person name="Engstrom P."/>
            <person name="Fagiolini M."/>
            <person name="Faulkner G."/>
            <person name="Fletcher C.F."/>
            <person name="Fukushima T."/>
            <person name="Furuno M."/>
            <person name="Futaki S."/>
            <person name="Gariboldi M."/>
            <person name="Georgii-Hemming P."/>
            <person name="Gingeras T.R."/>
            <person name="Gojobori T."/>
            <person name="Green R.E."/>
            <person name="Gustincich S."/>
            <person name="Harbers M."/>
            <person name="Hayashi Y."/>
            <person name="Hensch T.K."/>
            <person name="Hirokawa N."/>
            <person name="Hill D."/>
            <person name="Huminiecki L."/>
            <person name="Iacono M."/>
            <person name="Ikeo K."/>
            <person name="Iwama A."/>
            <person name="Ishikawa T."/>
            <person name="Jakt M."/>
            <person name="Kanapin A."/>
            <person name="Katoh M."/>
            <person name="Kawasawa Y."/>
            <person name="Kelso J."/>
            <person name="Kitamura H."/>
            <person name="Kitano H."/>
            <person name="Kollias G."/>
            <person name="Krishnan S.P."/>
            <person name="Kruger A."/>
            <person name="Kummerfeld S.K."/>
            <person name="Kurochkin I.V."/>
            <person name="Lareau L.F."/>
            <person name="Lazarevic D."/>
            <person name="Lipovich L."/>
            <person name="Liu J."/>
            <person name="Liuni S."/>
            <person name="McWilliam S."/>
            <person name="Madan Babu M."/>
            <person name="Madera M."/>
            <person name="Marchionni L."/>
            <person name="Matsuda H."/>
            <person name="Matsuzawa S."/>
            <person name="Miki H."/>
            <person name="Mignone F."/>
            <person name="Miyake S."/>
            <person name="Morris K."/>
            <person name="Mottagui-Tabar S."/>
            <person name="Mulder N."/>
            <person name="Nakano N."/>
            <person name="Nakauchi H."/>
            <person name="Ng P."/>
            <person name="Nilsson R."/>
            <person name="Nishiguchi S."/>
            <person name="Nishikawa S."/>
            <person name="Nori F."/>
            <person name="Ohara O."/>
            <person name="Okazaki Y."/>
            <person name="Orlando V."/>
            <person name="Pang K.C."/>
            <person name="Pavan W.J."/>
            <person name="Pavesi G."/>
            <person name="Pesole G."/>
            <person name="Petrovsky N."/>
            <person name="Piazza S."/>
            <person name="Reed J."/>
            <person name="Reid J.F."/>
            <person name="Ring B.Z."/>
            <person name="Ringwald M."/>
            <person name="Rost B."/>
            <person name="Ruan Y."/>
            <person name="Salzberg S.L."/>
            <person name="Sandelin A."/>
            <person name="Schneider C."/>
            <person name="Schoenbach C."/>
            <person name="Sekiguchi K."/>
            <person name="Semple C.A."/>
            <person name="Seno S."/>
            <person name="Sessa L."/>
            <person name="Sheng Y."/>
            <person name="Shibata Y."/>
            <person name="Shimada H."/>
            <person name="Shimada K."/>
            <person name="Silva D."/>
            <person name="Sinclair B."/>
            <person name="Sperling S."/>
            <person name="Stupka E."/>
            <person name="Sugiura K."/>
            <person name="Sultana R."/>
            <person name="Takenaka Y."/>
            <person name="Taki K."/>
            <person name="Tammoja K."/>
            <person name="Tan S.L."/>
            <person name="Tang S."/>
            <person name="Taylor M.S."/>
            <person name="Tegner J."/>
            <person name="Teichmann S.A."/>
            <person name="Ueda H.R."/>
            <person name="van Nimwegen E."/>
            <person name="Verardo R."/>
            <person name="Wei C.L."/>
            <person name="Yagi K."/>
            <person name="Yamanishi H."/>
            <person name="Zabarovsky E."/>
            <person name="Zhu S."/>
            <person name="Zimmer A."/>
            <person name="Hide W."/>
            <person name="Bult C."/>
            <person name="Grimmond S.M."/>
            <person name="Teasdale R.D."/>
            <person name="Liu E.T."/>
            <person name="Brusic V."/>
            <person name="Quackenbush J."/>
            <person name="Wahlestedt C."/>
            <person name="Mattick J.S."/>
            <person name="Hume D.A."/>
            <person name="Kai C."/>
            <person name="Sasaki D."/>
            <person name="Tomaru Y."/>
            <person name="Fukuda S."/>
            <person name="Kanamori-Katayama M."/>
            <person name="Suzuki M."/>
            <person name="Aoki J."/>
            <person name="Arakawa T."/>
            <person name="Iida J."/>
            <person name="Imamura K."/>
            <person name="Itoh M."/>
            <person name="Kato T."/>
            <person name="Kawaji H."/>
            <person name="Kawagashira N."/>
            <person name="Kawashima T."/>
            <person name="Kojima M."/>
            <person name="Kondo S."/>
            <person name="Konno H."/>
            <person name="Nakano K."/>
            <person name="Ninomiya N."/>
            <person name="Nishio T."/>
            <person name="Okada M."/>
            <person name="Plessy C."/>
            <person name="Shibata K."/>
            <person name="Shiraki T."/>
            <person name="Suzuki S."/>
            <person name="Tagami M."/>
            <person name="Waki K."/>
            <person name="Watahiki A."/>
            <person name="Okamura-Oho Y."/>
            <person name="Suzuki H."/>
            <person name="Kawai J."/>
            <person name="Hayashizaki Y."/>
        </authorList>
    </citation>
    <scope>NUCLEOTIDE SEQUENCE [LARGE SCALE MRNA] (ISOFORM 1)</scope>
    <source>
        <strain>C57BL/6J</strain>
        <tissue>Liver</tissue>
    </source>
</reference>
<reference key="2">
    <citation type="journal article" date="2004" name="Genome Res.">
        <title>The status, quality, and expansion of the NIH full-length cDNA project: the Mammalian Gene Collection (MGC).</title>
        <authorList>
            <consortium name="The MGC Project Team"/>
        </authorList>
    </citation>
    <scope>NUCLEOTIDE SEQUENCE [LARGE SCALE MRNA] (ISOFORMS 1 AND 2)</scope>
    <source>
        <strain>Czech II</strain>
        <tissue>Mammary tumor</tissue>
    </source>
</reference>
<reference key="3">
    <citation type="journal article" date="2010" name="Cell">
        <title>A tissue-specific atlas of mouse protein phosphorylation and expression.</title>
        <authorList>
            <person name="Huttlin E.L."/>
            <person name="Jedrychowski M.P."/>
            <person name="Elias J.E."/>
            <person name="Goswami T."/>
            <person name="Rad R."/>
            <person name="Beausoleil S.A."/>
            <person name="Villen J."/>
            <person name="Haas W."/>
            <person name="Sowa M.E."/>
            <person name="Gygi S.P."/>
        </authorList>
    </citation>
    <scope>IDENTIFICATION BY MASS SPECTROMETRY [LARGE SCALE ANALYSIS]</scope>
    <source>
        <tissue>Brain</tissue>
        <tissue>Kidney</tissue>
        <tissue>Liver</tissue>
    </source>
</reference>
<reference key="4">
    <citation type="journal article" date="2005" name="Proteins">
        <title>Crystal structure of a conserved hypothetical protein (gi: 13879369) from mouse at 1.90 A resolution reveals a new fold.</title>
        <authorList>
            <person name="Klock H.E."/>
            <person name="Schwarzenbacher R."/>
            <person name="Xu Q."/>
            <person name="McMullan D."/>
            <person name="Abdubek P."/>
            <person name="Ambing E."/>
            <person name="Axelrod H."/>
            <person name="Biorac T."/>
            <person name="Canaves J.M."/>
            <person name="Chiu H.-J."/>
            <person name="Deacon A.M."/>
            <person name="DiDonato M."/>
            <person name="Elsliger M.-A."/>
            <person name="Godzik A."/>
            <person name="Grittini C."/>
            <person name="Grzechnik S.K."/>
            <person name="Hale J."/>
            <person name="Hampton E."/>
            <person name="Han G.W."/>
            <person name="Haugen J."/>
            <person name="Hornsby M."/>
            <person name="Jaroszewski L."/>
            <person name="Koesema E."/>
            <person name="Kreusch A."/>
            <person name="Kuhn P."/>
            <person name="Miller M.D."/>
            <person name="Moy K."/>
            <person name="Nigoghossian E."/>
            <person name="Paulsen J."/>
            <person name="Quijano K."/>
            <person name="Reyes R."/>
            <person name="Rife C."/>
            <person name="Sims E."/>
            <person name="Spraggon G."/>
            <person name="Stevens R.C."/>
            <person name="van den Bedem H."/>
            <person name="Velasquez J."/>
            <person name="Vincent J."/>
            <person name="White A."/>
            <person name="Wolf G."/>
            <person name="Hodgson K.O."/>
            <person name="Wooley J."/>
            <person name="Lesley S.A."/>
            <person name="Wilson I.A."/>
        </authorList>
    </citation>
    <scope>X-RAY CRYSTALLOGRAPHY (1.9 ANGSTROMS)</scope>
    <scope>SUBUNIT</scope>
</reference>
<reference key="5">
    <citation type="journal article" date="2010" name="Acta Crystallogr. F">
        <title>Comparison of NMR and crystal structures highlights conformational isomerism in protein active sites.</title>
        <authorList>
            <person name="Serrano P."/>
            <person name="Pedrini B."/>
            <person name="Geralt M."/>
            <person name="Jaudzems K."/>
            <person name="Mohanty B."/>
            <person name="Horst R."/>
            <person name="Herrmann T."/>
            <person name="Elsliger M.A."/>
            <person name="Wilson I.A."/>
            <person name="Wuthrich K."/>
        </authorList>
    </citation>
    <scope>STRUCTURE BY NMR</scope>
</reference>
<comment type="function">
    <text evidence="2">Contributes to degradation of proteins cross-linked by transglutaminases by degrading the cross-link between a lysine and a glutamic acid residue. Catalyzes the formation of 5-oxo-L-proline from L-gamma-glutamyl-L-epsilon-lysine. Inactive with L-gamma-glutamyl-alpha-amino acid substrates such as L-gamma-glutamyl-L-alpha-cysteine and L-gamma-glutamyl-L-alpha-alanine.</text>
</comment>
<comment type="catalytic activity">
    <reaction evidence="2">
        <text>epsilon-(gamma-L-glutamyl)-L-lysine = 5-oxo-L-proline + L-lysine</text>
        <dbReference type="Rhea" id="RHEA:16961"/>
        <dbReference type="ChEBI" id="CHEBI:32551"/>
        <dbReference type="ChEBI" id="CHEBI:58402"/>
        <dbReference type="ChEBI" id="CHEBI:133752"/>
        <dbReference type="EC" id="4.3.2.8"/>
    </reaction>
</comment>
<comment type="subunit">
    <text evidence="5">Monomer.</text>
</comment>
<comment type="alternative products">
    <event type="alternative splicing"/>
    <isoform>
        <id>Q923B0-1</id>
        <name>1</name>
        <sequence type="displayed"/>
    </isoform>
    <isoform>
        <id>Q923B0-2</id>
        <name>2</name>
        <sequence type="described" ref="VSP_031641 VSP_031642"/>
    </isoform>
</comment>
<comment type="similarity">
    <text evidence="4">Belongs to the gamma-glutamylcyclotransferase family.</text>
</comment>
<evidence type="ECO:0000250" key="1"/>
<evidence type="ECO:0000250" key="2">
    <source>
        <dbReference type="UniProtKB" id="Q9BVM4"/>
    </source>
</evidence>
<evidence type="ECO:0000303" key="3">
    <source>
    </source>
</evidence>
<evidence type="ECO:0000305" key="4"/>
<evidence type="ECO:0000305" key="5">
    <source>
    </source>
</evidence>
<evidence type="ECO:0007829" key="6">
    <source>
        <dbReference type="PDB" id="1VKB"/>
    </source>
</evidence>
<evidence type="ECO:0007829" key="7">
    <source>
        <dbReference type="PDB" id="2KL2"/>
    </source>
</evidence>
<keyword id="KW-0002">3D-structure</keyword>
<keyword id="KW-0025">Alternative splicing</keyword>
<keyword id="KW-0456">Lyase</keyword>
<keyword id="KW-1185">Reference proteome</keyword>
<dbReference type="EC" id="4.3.2.8" evidence="2"/>
<dbReference type="EMBL" id="AK050251">
    <property type="protein sequence ID" value="BAC34147.1"/>
    <property type="molecule type" value="mRNA"/>
</dbReference>
<dbReference type="EMBL" id="BC006662">
    <property type="protein sequence ID" value="AAH06662.1"/>
    <property type="molecule type" value="mRNA"/>
</dbReference>
<dbReference type="EMBL" id="BC080839">
    <property type="protein sequence ID" value="AAH80839.1"/>
    <property type="molecule type" value="mRNA"/>
</dbReference>
<dbReference type="CCDS" id="CCDS27351.1">
    <molecule id="Q923B0-1"/>
</dbReference>
<dbReference type="RefSeq" id="NP_001412736.1">
    <molecule id="Q923B0-1"/>
    <property type="nucleotide sequence ID" value="NM_001425807.1"/>
</dbReference>
<dbReference type="RefSeq" id="NP_001412737.1">
    <molecule id="Q923B0-1"/>
    <property type="nucleotide sequence ID" value="NM_001425808.1"/>
</dbReference>
<dbReference type="RefSeq" id="NP_001412738.1">
    <molecule id="Q923B0-1"/>
    <property type="nucleotide sequence ID" value="NM_001425809.1"/>
</dbReference>
<dbReference type="RefSeq" id="NP_001412739.1">
    <molecule id="Q923B0-1"/>
    <property type="nucleotide sequence ID" value="NM_001425810.1"/>
</dbReference>
<dbReference type="RefSeq" id="NP_001412740.1">
    <molecule id="Q923B0-1"/>
    <property type="nucleotide sequence ID" value="NM_001425811.1"/>
</dbReference>
<dbReference type="RefSeq" id="NP_663441.1">
    <molecule id="Q923B0-1"/>
    <property type="nucleotide sequence ID" value="NM_145466.3"/>
</dbReference>
<dbReference type="RefSeq" id="XP_006518983.1">
    <property type="nucleotide sequence ID" value="XM_006518920.2"/>
</dbReference>
<dbReference type="PDB" id="1VKB">
    <property type="method" value="X-ray"/>
    <property type="resolution" value="1.90 A"/>
    <property type="chains" value="A=1-149"/>
</dbReference>
<dbReference type="PDB" id="2KL2">
    <property type="method" value="NMR"/>
    <property type="chains" value="A=1-149"/>
</dbReference>
<dbReference type="PDBsum" id="1VKB"/>
<dbReference type="PDBsum" id="2KL2"/>
<dbReference type="BMRB" id="Q923B0"/>
<dbReference type="SMR" id="Q923B0"/>
<dbReference type="FunCoup" id="Q923B0">
    <property type="interactions" value="417"/>
</dbReference>
<dbReference type="STRING" id="10090.ENSMUSP00000037278"/>
<dbReference type="jPOST" id="Q923B0"/>
<dbReference type="PaxDb" id="10090-ENSMUSP00000037278"/>
<dbReference type="PeptideAtlas" id="Q923B0"/>
<dbReference type="ProteomicsDB" id="266798">
    <molecule id="Q923B0-1"/>
</dbReference>
<dbReference type="ProteomicsDB" id="266799">
    <molecule id="Q923B0-2"/>
</dbReference>
<dbReference type="Pumba" id="Q923B0"/>
<dbReference type="Antibodypedia" id="57333">
    <property type="antibodies" value="78 antibodies from 16 providers"/>
</dbReference>
<dbReference type="DNASU" id="223267"/>
<dbReference type="Ensembl" id="ENSMUST00000038075.12">
    <molecule id="Q923B0-1"/>
    <property type="protein sequence ID" value="ENSMUSP00000037278.6"/>
    <property type="gene ID" value="ENSMUSG00000041625.16"/>
</dbReference>
<dbReference type="Ensembl" id="ENSMUST00000110679.9">
    <molecule id="Q923B0-2"/>
    <property type="protein sequence ID" value="ENSMUSP00000135487.2"/>
    <property type="gene ID" value="ENSMUSG00000041625.16"/>
</dbReference>
<dbReference type="GeneID" id="223267"/>
<dbReference type="KEGG" id="mmu:223267"/>
<dbReference type="UCSC" id="uc011zqm.1">
    <molecule id="Q923B0-1"/>
    <property type="organism name" value="mouse"/>
</dbReference>
<dbReference type="AGR" id="MGI:2385008"/>
<dbReference type="CTD" id="87769"/>
<dbReference type="MGI" id="MGI:2385008">
    <property type="gene designation" value="Ggact"/>
</dbReference>
<dbReference type="VEuPathDB" id="HostDB:ENSMUSG00000041625"/>
<dbReference type="eggNOG" id="KOG4450">
    <property type="taxonomic scope" value="Eukaryota"/>
</dbReference>
<dbReference type="GeneTree" id="ENSGT00390000010543"/>
<dbReference type="HOGENOM" id="CLU_2605416_0_0_1"/>
<dbReference type="InParanoid" id="Q923B0"/>
<dbReference type="OMA" id="FENIPTM"/>
<dbReference type="OrthoDB" id="113620at2759"/>
<dbReference type="PhylomeDB" id="Q923B0"/>
<dbReference type="TreeFam" id="TF323258"/>
<dbReference type="BioGRID-ORCS" id="223267">
    <property type="hits" value="1 hit in 78 CRISPR screens"/>
</dbReference>
<dbReference type="ChiTaRS" id="Ggact">
    <property type="organism name" value="mouse"/>
</dbReference>
<dbReference type="EvolutionaryTrace" id="Q923B0"/>
<dbReference type="PRO" id="PR:Q923B0"/>
<dbReference type="Proteomes" id="UP000000589">
    <property type="component" value="Chromosome 14"/>
</dbReference>
<dbReference type="RNAct" id="Q923B0">
    <property type="molecule type" value="protein"/>
</dbReference>
<dbReference type="Bgee" id="ENSMUSG00000041625">
    <property type="expression patterns" value="Expressed in right kidney and 200 other cell types or tissues"/>
</dbReference>
<dbReference type="ExpressionAtlas" id="Q923B0">
    <property type="expression patterns" value="baseline and differential"/>
</dbReference>
<dbReference type="GO" id="GO:0061929">
    <property type="term" value="F:gamma-glutamylaminecyclotransferase activity"/>
    <property type="evidence" value="ECO:0000250"/>
    <property type="project" value="UniProtKB"/>
</dbReference>
<dbReference type="GO" id="GO:0042219">
    <property type="term" value="P:modified amino acid catabolic process"/>
    <property type="evidence" value="ECO:0000250"/>
    <property type="project" value="UniProtKB"/>
</dbReference>
<dbReference type="CDD" id="cd06661">
    <property type="entry name" value="GGCT_like"/>
    <property type="match status" value="1"/>
</dbReference>
<dbReference type="FunFam" id="3.10.490.10:FF:000008">
    <property type="entry name" value="Gamma-glutamylaminecyclotransferase A"/>
    <property type="match status" value="1"/>
</dbReference>
<dbReference type="Gene3D" id="3.10.490.10">
    <property type="entry name" value="Gamma-glutamyl cyclotransferase-like"/>
    <property type="match status" value="1"/>
</dbReference>
<dbReference type="InterPro" id="IPR009288">
    <property type="entry name" value="AIG2-like_dom"/>
</dbReference>
<dbReference type="InterPro" id="IPR039126">
    <property type="entry name" value="GGACT"/>
</dbReference>
<dbReference type="InterPro" id="IPR013024">
    <property type="entry name" value="GGCT-like"/>
</dbReference>
<dbReference type="InterPro" id="IPR036568">
    <property type="entry name" value="GGCT-like_sf"/>
</dbReference>
<dbReference type="PANTHER" id="PTHR12510:SF4">
    <property type="entry name" value="GAMMA-GLUTAMYLAMINECYCLOTRANSFERASE"/>
    <property type="match status" value="1"/>
</dbReference>
<dbReference type="PANTHER" id="PTHR12510">
    <property type="entry name" value="TROPONIN C-AKIN-1 PROTEIN"/>
    <property type="match status" value="1"/>
</dbReference>
<dbReference type="Pfam" id="PF06094">
    <property type="entry name" value="GGACT"/>
    <property type="match status" value="1"/>
</dbReference>
<dbReference type="SUPFAM" id="SSF110857">
    <property type="entry name" value="Gamma-glutamyl cyclotransferase-like"/>
    <property type="match status" value="1"/>
</dbReference>
<name>GGACT_MOUSE</name>
<proteinExistence type="evidence at protein level"/>